<dbReference type="EC" id="2.3.1.47" evidence="1"/>
<dbReference type="EMBL" id="CP000572">
    <property type="protein sequence ID" value="ABN90185.1"/>
    <property type="molecule type" value="Genomic_DNA"/>
</dbReference>
<dbReference type="RefSeq" id="WP_004189736.1">
    <property type="nucleotide sequence ID" value="NC_009076.1"/>
</dbReference>
<dbReference type="SMR" id="A3NQS3"/>
<dbReference type="GeneID" id="93058884"/>
<dbReference type="KEGG" id="bpl:BURPS1106A_0411"/>
<dbReference type="HOGENOM" id="CLU_015846_11_2_4"/>
<dbReference type="UniPathway" id="UPA00078"/>
<dbReference type="Proteomes" id="UP000006738">
    <property type="component" value="Chromosome I"/>
</dbReference>
<dbReference type="GO" id="GO:0008710">
    <property type="term" value="F:8-amino-7-oxononanoate synthase activity"/>
    <property type="evidence" value="ECO:0007669"/>
    <property type="project" value="UniProtKB-UniRule"/>
</dbReference>
<dbReference type="GO" id="GO:0030170">
    <property type="term" value="F:pyridoxal phosphate binding"/>
    <property type="evidence" value="ECO:0007669"/>
    <property type="project" value="UniProtKB-UniRule"/>
</dbReference>
<dbReference type="GO" id="GO:0009102">
    <property type="term" value="P:biotin biosynthetic process"/>
    <property type="evidence" value="ECO:0007669"/>
    <property type="project" value="UniProtKB-UniRule"/>
</dbReference>
<dbReference type="Gene3D" id="3.90.1150.10">
    <property type="entry name" value="Aspartate Aminotransferase, domain 1"/>
    <property type="match status" value="1"/>
</dbReference>
<dbReference type="Gene3D" id="3.40.640.10">
    <property type="entry name" value="Type I PLP-dependent aspartate aminotransferase-like (Major domain)"/>
    <property type="match status" value="1"/>
</dbReference>
<dbReference type="HAMAP" id="MF_01693">
    <property type="entry name" value="BioF_aminotrans_2"/>
    <property type="match status" value="1"/>
</dbReference>
<dbReference type="InterPro" id="IPR004839">
    <property type="entry name" value="Aminotransferase_I/II_large"/>
</dbReference>
<dbReference type="InterPro" id="IPR050087">
    <property type="entry name" value="AON_synthase_class-II"/>
</dbReference>
<dbReference type="InterPro" id="IPR004723">
    <property type="entry name" value="AONS_Archaea/Proteobacteria"/>
</dbReference>
<dbReference type="InterPro" id="IPR022834">
    <property type="entry name" value="AONS_Proteobacteria"/>
</dbReference>
<dbReference type="InterPro" id="IPR015424">
    <property type="entry name" value="PyrdxlP-dep_Trfase"/>
</dbReference>
<dbReference type="InterPro" id="IPR015421">
    <property type="entry name" value="PyrdxlP-dep_Trfase_major"/>
</dbReference>
<dbReference type="InterPro" id="IPR015422">
    <property type="entry name" value="PyrdxlP-dep_Trfase_small"/>
</dbReference>
<dbReference type="NCBIfam" id="TIGR00858">
    <property type="entry name" value="bioF"/>
    <property type="match status" value="1"/>
</dbReference>
<dbReference type="PANTHER" id="PTHR13693:SF100">
    <property type="entry name" value="8-AMINO-7-OXONONANOATE SYNTHASE"/>
    <property type="match status" value="1"/>
</dbReference>
<dbReference type="PANTHER" id="PTHR13693">
    <property type="entry name" value="CLASS II AMINOTRANSFERASE/8-AMINO-7-OXONONANOATE SYNTHASE"/>
    <property type="match status" value="1"/>
</dbReference>
<dbReference type="Pfam" id="PF00155">
    <property type="entry name" value="Aminotran_1_2"/>
    <property type="match status" value="1"/>
</dbReference>
<dbReference type="SUPFAM" id="SSF53383">
    <property type="entry name" value="PLP-dependent transferases"/>
    <property type="match status" value="1"/>
</dbReference>
<protein>
    <recommendedName>
        <fullName evidence="1">8-amino-7-oxononanoate synthase</fullName>
        <shortName evidence="1">AONS</shortName>
        <ecNumber evidence="1">2.3.1.47</ecNumber>
    </recommendedName>
    <alternativeName>
        <fullName evidence="1">7-keto-8-amino-pelargonic acid synthase</fullName>
        <shortName evidence="1">7-KAP synthase</shortName>
        <shortName evidence="1">KAPA synthase</shortName>
    </alternativeName>
    <alternativeName>
        <fullName evidence="1">8-amino-7-ketopelargonate synthase</fullName>
    </alternativeName>
</protein>
<keyword id="KW-0093">Biotin biosynthesis</keyword>
<keyword id="KW-0663">Pyridoxal phosphate</keyword>
<keyword id="KW-0808">Transferase</keyword>
<reference key="1">
    <citation type="journal article" date="2010" name="Genome Biol. Evol.">
        <title>Continuing evolution of Burkholderia mallei through genome reduction and large-scale rearrangements.</title>
        <authorList>
            <person name="Losada L."/>
            <person name="Ronning C.M."/>
            <person name="DeShazer D."/>
            <person name="Woods D."/>
            <person name="Fedorova N."/>
            <person name="Kim H.S."/>
            <person name="Shabalina S.A."/>
            <person name="Pearson T.R."/>
            <person name="Brinkac L."/>
            <person name="Tan P."/>
            <person name="Nandi T."/>
            <person name="Crabtree J."/>
            <person name="Badger J."/>
            <person name="Beckstrom-Sternberg S."/>
            <person name="Saqib M."/>
            <person name="Schutzer S.E."/>
            <person name="Keim P."/>
            <person name="Nierman W.C."/>
        </authorList>
    </citation>
    <scope>NUCLEOTIDE SEQUENCE [LARGE SCALE GENOMIC DNA]</scope>
    <source>
        <strain>1106a</strain>
    </source>
</reference>
<gene>
    <name evidence="1" type="primary">bioF</name>
    <name type="ordered locus">BURPS1106A_0411</name>
</gene>
<sequence>MNPLATLEQGLADIDAQGLRRCRRVADTACGAHMTVDGRAIIGFASNDYLGLAAHPRLVEAFAEGARRYGSGSGGSHLLGGHSRAHATLEDELAAFSGGFSDAPRALYFSTGYMANLAALTALAGRGATIFSDALNHASLIDGARLSRANVQIYPHGDADALDARLRACDAPTKLIVSDTVFSMDGDVAPLARLVALAETHGAWLVVDDAHGFGVLGPQGRGALAAHGLRSPNLVYVGTLGKAAGVAGAFVVAHETVIEWLVQRARSYIFTTAAPPSVACAVSASLAVIASDEGDARRAHLGALIKRTRAILRATHWQPVDSHTAVQPLVIGSNEATLAAMAALDAQGLWVPAIRPPTVPAGTSRLRISLSAAHSFDDLARLEAALVTPIGAAA</sequence>
<name>BIOF_BURP0</name>
<proteinExistence type="inferred from homology"/>
<feature type="chain" id="PRO_0000380938" description="8-amino-7-oxononanoate synthase">
    <location>
        <begin position="1"/>
        <end position="394"/>
    </location>
</feature>
<feature type="binding site" evidence="1">
    <location>
        <position position="21"/>
    </location>
    <ligand>
        <name>substrate</name>
    </ligand>
</feature>
<feature type="binding site" evidence="1">
    <location>
        <begin position="112"/>
        <end position="113"/>
    </location>
    <ligand>
        <name>pyridoxal 5'-phosphate</name>
        <dbReference type="ChEBI" id="CHEBI:597326"/>
    </ligand>
</feature>
<feature type="binding site" evidence="1">
    <location>
        <position position="137"/>
    </location>
    <ligand>
        <name>substrate</name>
    </ligand>
</feature>
<feature type="binding site" evidence="1">
    <location>
        <position position="183"/>
    </location>
    <ligand>
        <name>pyridoxal 5'-phosphate</name>
        <dbReference type="ChEBI" id="CHEBI:597326"/>
    </ligand>
</feature>
<feature type="binding site" evidence="1">
    <location>
        <position position="211"/>
    </location>
    <ligand>
        <name>pyridoxal 5'-phosphate</name>
        <dbReference type="ChEBI" id="CHEBI:597326"/>
    </ligand>
</feature>
<feature type="binding site" evidence="1">
    <location>
        <position position="239"/>
    </location>
    <ligand>
        <name>pyridoxal 5'-phosphate</name>
        <dbReference type="ChEBI" id="CHEBI:597326"/>
    </ligand>
</feature>
<feature type="binding site" evidence="1">
    <location>
        <position position="358"/>
    </location>
    <ligand>
        <name>substrate</name>
    </ligand>
</feature>
<feature type="modified residue" description="N6-(pyridoxal phosphate)lysine" evidence="1">
    <location>
        <position position="242"/>
    </location>
</feature>
<evidence type="ECO:0000255" key="1">
    <source>
        <dbReference type="HAMAP-Rule" id="MF_01693"/>
    </source>
</evidence>
<organism>
    <name type="scientific">Burkholderia pseudomallei (strain 1106a)</name>
    <dbReference type="NCBI Taxonomy" id="357348"/>
    <lineage>
        <taxon>Bacteria</taxon>
        <taxon>Pseudomonadati</taxon>
        <taxon>Pseudomonadota</taxon>
        <taxon>Betaproteobacteria</taxon>
        <taxon>Burkholderiales</taxon>
        <taxon>Burkholderiaceae</taxon>
        <taxon>Burkholderia</taxon>
        <taxon>pseudomallei group</taxon>
    </lineage>
</organism>
<comment type="function">
    <text evidence="1">Catalyzes the decarboxylative condensation of pimeloyl-[acyl-carrier protein] and L-alanine to produce 8-amino-7-oxononanoate (AON), [acyl-carrier protein], and carbon dioxide.</text>
</comment>
<comment type="catalytic activity">
    <reaction evidence="1">
        <text>6-carboxyhexanoyl-[ACP] + L-alanine + H(+) = (8S)-8-amino-7-oxononanoate + holo-[ACP] + CO2</text>
        <dbReference type="Rhea" id="RHEA:42288"/>
        <dbReference type="Rhea" id="RHEA-COMP:9685"/>
        <dbReference type="Rhea" id="RHEA-COMP:9955"/>
        <dbReference type="ChEBI" id="CHEBI:15378"/>
        <dbReference type="ChEBI" id="CHEBI:16526"/>
        <dbReference type="ChEBI" id="CHEBI:57972"/>
        <dbReference type="ChEBI" id="CHEBI:64479"/>
        <dbReference type="ChEBI" id="CHEBI:78846"/>
        <dbReference type="ChEBI" id="CHEBI:149468"/>
        <dbReference type="EC" id="2.3.1.47"/>
    </reaction>
</comment>
<comment type="cofactor">
    <cofactor evidence="1">
        <name>pyridoxal 5'-phosphate</name>
        <dbReference type="ChEBI" id="CHEBI:597326"/>
    </cofactor>
</comment>
<comment type="pathway">
    <text evidence="1">Cofactor biosynthesis; biotin biosynthesis.</text>
</comment>
<comment type="subunit">
    <text evidence="1">Homodimer.</text>
</comment>
<comment type="similarity">
    <text evidence="1">Belongs to the class-II pyridoxal-phosphate-dependent aminotransferase family. BioF subfamily.</text>
</comment>
<accession>A3NQS3</accession>